<name>ACBP_RABIT</name>
<comment type="function">
    <text evidence="2">Binds medium- and long-chain acyl-CoA esters with very high affinity and may function as an intracellular carrier of acyl-CoA esters. It is also able to displace diazepam from the benzodiazepine (BZD) recognition site located on the GABA type A receptor. It is therefore possible that this protein also acts as a neuropeptide to modulate the action of the GABA receptor (By similarity).</text>
</comment>
<comment type="subunit">
    <text evidence="2">Monomer.</text>
</comment>
<comment type="subcellular location">
    <subcellularLocation>
        <location evidence="3">Endoplasmic reticulum</location>
    </subcellularLocation>
    <subcellularLocation>
        <location evidence="3">Golgi apparatus</location>
    </subcellularLocation>
    <text evidence="3">Golgi localization is dependent on ligand binding.</text>
</comment>
<comment type="similarity">
    <text evidence="6">Belongs to the ACBP family.</text>
</comment>
<sequence>MSQAEFEKAAEEVKNLKTKPADAEMLFIYSHYKQATVGDVNTERPGMLDLKGKAKWDAWNELKGTSKESAMRAYVDKVEELKQKYGI</sequence>
<protein>
    <recommendedName>
        <fullName>Acyl-CoA-binding protein</fullName>
        <shortName>ACBP</shortName>
    </recommendedName>
    <alternativeName>
        <fullName>Diazepam-binding inhibitor</fullName>
        <shortName>DBI</shortName>
    </alternativeName>
    <alternativeName>
        <fullName>Endozepine</fullName>
        <shortName>EP</shortName>
    </alternativeName>
</protein>
<gene>
    <name type="primary">DBI</name>
</gene>
<proteinExistence type="inferred from homology"/>
<feature type="initiator methionine" description="Removed" evidence="2">
    <location>
        <position position="1"/>
    </location>
</feature>
<feature type="chain" id="PRO_0000214006" description="Acyl-CoA-binding protein">
    <location>
        <begin position="2"/>
        <end position="87"/>
    </location>
</feature>
<feature type="domain" description="ACB" evidence="5">
    <location>
        <begin position="2"/>
        <end position="87"/>
    </location>
</feature>
<feature type="binding site" evidence="1">
    <location>
        <position position="14"/>
    </location>
    <ligand>
        <name>an acyl-CoA</name>
        <dbReference type="ChEBI" id="CHEBI:58342"/>
    </ligand>
</feature>
<feature type="binding site" evidence="1">
    <location>
        <begin position="29"/>
        <end position="33"/>
    </location>
    <ligand>
        <name>an acyl-CoA</name>
        <dbReference type="ChEBI" id="CHEBI:58342"/>
    </ligand>
</feature>
<feature type="binding site" evidence="1">
    <location>
        <position position="51"/>
    </location>
    <ligand>
        <name>an acyl-CoA</name>
        <dbReference type="ChEBI" id="CHEBI:58342"/>
    </ligand>
</feature>
<feature type="binding site" evidence="1">
    <location>
        <position position="55"/>
    </location>
    <ligand>
        <name>an acyl-CoA</name>
        <dbReference type="ChEBI" id="CHEBI:58342"/>
    </ligand>
</feature>
<feature type="binding site" evidence="1">
    <location>
        <position position="74"/>
    </location>
    <ligand>
        <name>an acyl-CoA</name>
        <dbReference type="ChEBI" id="CHEBI:58342"/>
    </ligand>
</feature>
<feature type="modified residue" description="N-acetylserine" evidence="2">
    <location>
        <position position="2"/>
    </location>
</feature>
<feature type="modified residue" description="N6-acetyllysine; alternate" evidence="3">
    <location>
        <position position="8"/>
    </location>
</feature>
<feature type="modified residue" description="N6-succinyllysine; alternate" evidence="4">
    <location>
        <position position="8"/>
    </location>
</feature>
<feature type="modified residue" description="N6-succinyllysine" evidence="4">
    <location>
        <position position="17"/>
    </location>
</feature>
<feature type="modified residue" description="N6-acetyllysine" evidence="3">
    <location>
        <position position="19"/>
    </location>
</feature>
<feature type="modified residue" description="Phosphotyrosine" evidence="3">
    <location>
        <position position="29"/>
    </location>
</feature>
<feature type="modified residue" description="N6-acetyllysine" evidence="4">
    <location>
        <position position="51"/>
    </location>
</feature>
<feature type="modified residue" description="N6-(2-hydroxyisobutyryl)lysine; alternate" evidence="3">
    <location>
        <position position="55"/>
    </location>
</feature>
<feature type="modified residue" description="N6-acetyllysine; alternate" evidence="3">
    <location>
        <position position="55"/>
    </location>
</feature>
<feature type="modified residue" description="N6-malonyllysine; alternate" evidence="1">
    <location>
        <position position="55"/>
    </location>
</feature>
<feature type="modified residue" description="N6-succinyllysine; alternate" evidence="4">
    <location>
        <position position="55"/>
    </location>
</feature>
<feature type="modified residue" description="N6-acetyllysine; alternate" evidence="3">
    <location>
        <position position="77"/>
    </location>
</feature>
<feature type="modified residue" description="N6-succinyllysine; alternate" evidence="4">
    <location>
        <position position="77"/>
    </location>
</feature>
<keyword id="KW-0007">Acetylation</keyword>
<keyword id="KW-0256">Endoplasmic reticulum</keyword>
<keyword id="KW-0333">Golgi apparatus</keyword>
<keyword id="KW-0379">Hydroxylation</keyword>
<keyword id="KW-0446">Lipid-binding</keyword>
<keyword id="KW-0597">Phosphoprotein</keyword>
<keyword id="KW-1185">Reference proteome</keyword>
<keyword id="KW-0813">Transport</keyword>
<organism evidence="7">
    <name type="scientific">Oryctolagus cuniculus</name>
    <name type="common">Rabbit</name>
    <dbReference type="NCBI Taxonomy" id="9986"/>
    <lineage>
        <taxon>Eukaryota</taxon>
        <taxon>Metazoa</taxon>
        <taxon>Chordata</taxon>
        <taxon>Craniata</taxon>
        <taxon>Vertebrata</taxon>
        <taxon>Euteleostomi</taxon>
        <taxon>Mammalia</taxon>
        <taxon>Eutheria</taxon>
        <taxon>Euarchontoglires</taxon>
        <taxon>Glires</taxon>
        <taxon>Lagomorpha</taxon>
        <taxon>Leporidae</taxon>
        <taxon>Oryctolagus</taxon>
    </lineage>
</organism>
<dbReference type="EMBL" id="AF407578">
    <property type="protein sequence ID" value="AAK98608.2"/>
    <property type="molecule type" value="mRNA"/>
</dbReference>
<dbReference type="RefSeq" id="NP_001075582.1">
    <property type="nucleotide sequence ID" value="NM_001082113.1"/>
</dbReference>
<dbReference type="SMR" id="Q8WN94"/>
<dbReference type="FunCoup" id="Q8WN94">
    <property type="interactions" value="1199"/>
</dbReference>
<dbReference type="STRING" id="9986.ENSOCUP00000003937"/>
<dbReference type="iPTMnet" id="Q8WN94"/>
<dbReference type="PaxDb" id="9986-ENSOCUP00000003937"/>
<dbReference type="Ensembl" id="ENSOCUT00000004563.3">
    <property type="protein sequence ID" value="ENSOCUP00000003937.2"/>
    <property type="gene ID" value="ENSOCUG00000004566.3"/>
</dbReference>
<dbReference type="GeneID" id="100008823"/>
<dbReference type="KEGG" id="ocu:100008823"/>
<dbReference type="CTD" id="1622"/>
<dbReference type="eggNOG" id="KOG0817">
    <property type="taxonomic scope" value="Eukaryota"/>
</dbReference>
<dbReference type="GeneTree" id="ENSGT00940000154846"/>
<dbReference type="HOGENOM" id="CLU_118853_4_1_1"/>
<dbReference type="InParanoid" id="Q8WN94"/>
<dbReference type="OMA" id="RYKFEAW"/>
<dbReference type="OrthoDB" id="346910at2759"/>
<dbReference type="TreeFam" id="TF335802"/>
<dbReference type="Proteomes" id="UP000001811">
    <property type="component" value="Chromosome 7"/>
</dbReference>
<dbReference type="Bgee" id="ENSOCUG00000004566">
    <property type="expression patterns" value="Expressed in prefrontal cortex and 16 other cell types or tissues"/>
</dbReference>
<dbReference type="GO" id="GO:0005783">
    <property type="term" value="C:endoplasmic reticulum"/>
    <property type="evidence" value="ECO:0007669"/>
    <property type="project" value="UniProtKB-SubCell"/>
</dbReference>
<dbReference type="GO" id="GO:0005794">
    <property type="term" value="C:Golgi apparatus"/>
    <property type="evidence" value="ECO:0007669"/>
    <property type="project" value="UniProtKB-SubCell"/>
</dbReference>
<dbReference type="GO" id="GO:0005739">
    <property type="term" value="C:mitochondrion"/>
    <property type="evidence" value="ECO:0007669"/>
    <property type="project" value="TreeGrafter"/>
</dbReference>
<dbReference type="GO" id="GO:0032994">
    <property type="term" value="C:protein-lipid complex"/>
    <property type="evidence" value="ECO:0007669"/>
    <property type="project" value="Ensembl"/>
</dbReference>
<dbReference type="GO" id="GO:0042802">
    <property type="term" value="F:identical protein binding"/>
    <property type="evidence" value="ECO:0007669"/>
    <property type="project" value="Ensembl"/>
</dbReference>
<dbReference type="GO" id="GO:0036042">
    <property type="term" value="F:long-chain fatty acyl-CoA binding"/>
    <property type="evidence" value="ECO:0007669"/>
    <property type="project" value="Ensembl"/>
</dbReference>
<dbReference type="GO" id="GO:0006631">
    <property type="term" value="P:fatty acid metabolic process"/>
    <property type="evidence" value="ECO:0007669"/>
    <property type="project" value="TreeGrafter"/>
</dbReference>
<dbReference type="GO" id="GO:0036151">
    <property type="term" value="P:phosphatidylcholine acyl-chain remodeling"/>
    <property type="evidence" value="ECO:0007669"/>
    <property type="project" value="Ensembl"/>
</dbReference>
<dbReference type="GO" id="GO:2001140">
    <property type="term" value="P:positive regulation of phospholipid transport"/>
    <property type="evidence" value="ECO:0007669"/>
    <property type="project" value="Ensembl"/>
</dbReference>
<dbReference type="CDD" id="cd00435">
    <property type="entry name" value="ACBP"/>
    <property type="match status" value="1"/>
</dbReference>
<dbReference type="FunFam" id="1.20.80.10:FF:000010">
    <property type="entry name" value="Acyl-CoA-binding domain-containing protein 5"/>
    <property type="match status" value="1"/>
</dbReference>
<dbReference type="Gene3D" id="1.20.80.10">
    <property type="match status" value="1"/>
</dbReference>
<dbReference type="InterPro" id="IPR022408">
    <property type="entry name" value="Acyl-CoA-binding_prot_CS"/>
</dbReference>
<dbReference type="InterPro" id="IPR000582">
    <property type="entry name" value="Acyl-CoA-binding_protein"/>
</dbReference>
<dbReference type="InterPro" id="IPR035984">
    <property type="entry name" value="Acyl-CoA-binding_sf"/>
</dbReference>
<dbReference type="InterPro" id="IPR014352">
    <property type="entry name" value="FERM/acyl-CoA-bd_prot_sf"/>
</dbReference>
<dbReference type="PANTHER" id="PTHR23310:SF54">
    <property type="entry name" value="ACYL-COA-BINDING PROTEIN"/>
    <property type="match status" value="1"/>
</dbReference>
<dbReference type="PANTHER" id="PTHR23310">
    <property type="entry name" value="ACYL-COA-BINDING PROTEIN, ACBP"/>
    <property type="match status" value="1"/>
</dbReference>
<dbReference type="Pfam" id="PF00887">
    <property type="entry name" value="ACBP"/>
    <property type="match status" value="1"/>
</dbReference>
<dbReference type="PRINTS" id="PR00689">
    <property type="entry name" value="ACOABINDINGP"/>
</dbReference>
<dbReference type="SUPFAM" id="SSF47027">
    <property type="entry name" value="Acyl-CoA binding protein"/>
    <property type="match status" value="1"/>
</dbReference>
<dbReference type="PROSITE" id="PS00880">
    <property type="entry name" value="ACB_1"/>
    <property type="match status" value="1"/>
</dbReference>
<dbReference type="PROSITE" id="PS51228">
    <property type="entry name" value="ACB_2"/>
    <property type="match status" value="1"/>
</dbReference>
<reference evidence="7" key="1">
    <citation type="submission" date="2001-12" db="EMBL/GenBank/DDBJ databases">
        <title>Localization of an endogenous diazepam ligand, acyl CoA binding protein, to Muller cells in rabbit retina.</title>
        <authorList>
            <person name="Barmack N.H."/>
            <person name="Liu H."/>
            <person name="Qian Z."/>
            <person name="Bilderback T."/>
        </authorList>
    </citation>
    <scope>NUCLEOTIDE SEQUENCE [MRNA]</scope>
</reference>
<accession>Q8WN94</accession>
<evidence type="ECO:0000250" key="1"/>
<evidence type="ECO:0000250" key="2">
    <source>
        <dbReference type="UniProtKB" id="P07107"/>
    </source>
</evidence>
<evidence type="ECO:0000250" key="3">
    <source>
        <dbReference type="UniProtKB" id="P07108"/>
    </source>
</evidence>
<evidence type="ECO:0000250" key="4">
    <source>
        <dbReference type="UniProtKB" id="P31786"/>
    </source>
</evidence>
<evidence type="ECO:0000255" key="5">
    <source>
        <dbReference type="PROSITE-ProRule" id="PRU00573"/>
    </source>
</evidence>
<evidence type="ECO:0000305" key="6"/>
<evidence type="ECO:0000312" key="7">
    <source>
        <dbReference type="EMBL" id="AAK98608.2"/>
    </source>
</evidence>